<protein>
    <recommendedName>
        <fullName evidence="1">Acyl carrier protein</fullName>
        <shortName evidence="1">ACP</shortName>
    </recommendedName>
</protein>
<evidence type="ECO:0000255" key="1">
    <source>
        <dbReference type="HAMAP-Rule" id="MF_01217"/>
    </source>
</evidence>
<evidence type="ECO:0000255" key="2">
    <source>
        <dbReference type="PROSITE-ProRule" id="PRU00258"/>
    </source>
</evidence>
<sequence length="79" mass="8712">MDNIEQRVKKIVAEQLGVAEAEIKNEASFVNDLGADSLDTVELVMALEDEFGMEIPDEEAEKITTVQQAIDYARANVKA</sequence>
<comment type="function">
    <text evidence="1">Carrier of the growing fatty acid chain in fatty acid biosynthesis.</text>
</comment>
<comment type="pathway">
    <text evidence="1">Lipid metabolism; fatty acid biosynthesis.</text>
</comment>
<comment type="subcellular location">
    <subcellularLocation>
        <location evidence="1">Cytoplasm</location>
    </subcellularLocation>
</comment>
<comment type="PTM">
    <text evidence="1">4'-phosphopantetheine is transferred from CoA to a specific serine of apo-ACP by AcpS. This modification is essential for activity because fatty acids are bound in thioester linkage to the sulfhydryl of the prosthetic group.</text>
</comment>
<comment type="similarity">
    <text evidence="1">Belongs to the acyl carrier protein (ACP) family.</text>
</comment>
<proteinExistence type="inferred from homology"/>
<keyword id="KW-0963">Cytoplasm</keyword>
<keyword id="KW-0275">Fatty acid biosynthesis</keyword>
<keyword id="KW-0276">Fatty acid metabolism</keyword>
<keyword id="KW-0444">Lipid biosynthesis</keyword>
<keyword id="KW-0443">Lipid metabolism</keyword>
<keyword id="KW-0596">Phosphopantetheine</keyword>
<keyword id="KW-0597">Phosphoprotein</keyword>
<feature type="chain" id="PRO_1000066572" description="Acyl carrier protein">
    <location>
        <begin position="1"/>
        <end position="79"/>
    </location>
</feature>
<feature type="domain" description="Carrier" evidence="2">
    <location>
        <begin position="2"/>
        <end position="77"/>
    </location>
</feature>
<feature type="modified residue" description="O-(pantetheine 4'-phosphoryl)serine" evidence="2">
    <location>
        <position position="37"/>
    </location>
</feature>
<dbReference type="EMBL" id="CP000546">
    <property type="protein sequence ID" value="ABN02992.1"/>
    <property type="molecule type" value="Genomic_DNA"/>
</dbReference>
<dbReference type="RefSeq" id="WP_004197638.1">
    <property type="nucleotide sequence ID" value="NC_008836.1"/>
</dbReference>
<dbReference type="SMR" id="A2S9Y5"/>
<dbReference type="GeneID" id="98102461"/>
<dbReference type="KEGG" id="bml:BMA10229_A2805"/>
<dbReference type="HOGENOM" id="CLU_108696_5_1_4"/>
<dbReference type="UniPathway" id="UPA00094"/>
<dbReference type="Proteomes" id="UP000002283">
    <property type="component" value="Chromosome I"/>
</dbReference>
<dbReference type="GO" id="GO:0005829">
    <property type="term" value="C:cytosol"/>
    <property type="evidence" value="ECO:0007669"/>
    <property type="project" value="TreeGrafter"/>
</dbReference>
<dbReference type="GO" id="GO:0016020">
    <property type="term" value="C:membrane"/>
    <property type="evidence" value="ECO:0007669"/>
    <property type="project" value="GOC"/>
</dbReference>
<dbReference type="GO" id="GO:0000035">
    <property type="term" value="F:acyl binding"/>
    <property type="evidence" value="ECO:0007669"/>
    <property type="project" value="TreeGrafter"/>
</dbReference>
<dbReference type="GO" id="GO:0000036">
    <property type="term" value="F:acyl carrier activity"/>
    <property type="evidence" value="ECO:0007669"/>
    <property type="project" value="UniProtKB-UniRule"/>
</dbReference>
<dbReference type="GO" id="GO:0009245">
    <property type="term" value="P:lipid A biosynthetic process"/>
    <property type="evidence" value="ECO:0007669"/>
    <property type="project" value="TreeGrafter"/>
</dbReference>
<dbReference type="FunFam" id="1.10.1200.10:FF:000001">
    <property type="entry name" value="Acyl carrier protein"/>
    <property type="match status" value="1"/>
</dbReference>
<dbReference type="Gene3D" id="1.10.1200.10">
    <property type="entry name" value="ACP-like"/>
    <property type="match status" value="1"/>
</dbReference>
<dbReference type="HAMAP" id="MF_01217">
    <property type="entry name" value="Acyl_carrier"/>
    <property type="match status" value="1"/>
</dbReference>
<dbReference type="InterPro" id="IPR003231">
    <property type="entry name" value="ACP"/>
</dbReference>
<dbReference type="InterPro" id="IPR036736">
    <property type="entry name" value="ACP-like_sf"/>
</dbReference>
<dbReference type="InterPro" id="IPR009081">
    <property type="entry name" value="PP-bd_ACP"/>
</dbReference>
<dbReference type="InterPro" id="IPR006162">
    <property type="entry name" value="Ppantetheine_attach_site"/>
</dbReference>
<dbReference type="NCBIfam" id="TIGR00517">
    <property type="entry name" value="acyl_carrier"/>
    <property type="match status" value="1"/>
</dbReference>
<dbReference type="NCBIfam" id="NF002148">
    <property type="entry name" value="PRK00982.1-2"/>
    <property type="match status" value="1"/>
</dbReference>
<dbReference type="NCBIfam" id="NF002149">
    <property type="entry name" value="PRK00982.1-3"/>
    <property type="match status" value="1"/>
</dbReference>
<dbReference type="NCBIfam" id="NF002150">
    <property type="entry name" value="PRK00982.1-4"/>
    <property type="match status" value="1"/>
</dbReference>
<dbReference type="NCBIfam" id="NF002151">
    <property type="entry name" value="PRK00982.1-5"/>
    <property type="match status" value="1"/>
</dbReference>
<dbReference type="PANTHER" id="PTHR20863">
    <property type="entry name" value="ACYL CARRIER PROTEIN"/>
    <property type="match status" value="1"/>
</dbReference>
<dbReference type="PANTHER" id="PTHR20863:SF76">
    <property type="entry name" value="CARRIER DOMAIN-CONTAINING PROTEIN"/>
    <property type="match status" value="1"/>
</dbReference>
<dbReference type="Pfam" id="PF00550">
    <property type="entry name" value="PP-binding"/>
    <property type="match status" value="1"/>
</dbReference>
<dbReference type="SUPFAM" id="SSF47336">
    <property type="entry name" value="ACP-like"/>
    <property type="match status" value="1"/>
</dbReference>
<dbReference type="PROSITE" id="PS50075">
    <property type="entry name" value="CARRIER"/>
    <property type="match status" value="1"/>
</dbReference>
<dbReference type="PROSITE" id="PS00012">
    <property type="entry name" value="PHOSPHOPANTETHEINE"/>
    <property type="match status" value="1"/>
</dbReference>
<gene>
    <name evidence="1" type="primary">acpP</name>
    <name type="ordered locus">BMA10229_A2805</name>
</gene>
<accession>A2S9Y5</accession>
<name>ACP_BURM9</name>
<organism>
    <name type="scientific">Burkholderia mallei (strain NCTC 10229)</name>
    <dbReference type="NCBI Taxonomy" id="412022"/>
    <lineage>
        <taxon>Bacteria</taxon>
        <taxon>Pseudomonadati</taxon>
        <taxon>Pseudomonadota</taxon>
        <taxon>Betaproteobacteria</taxon>
        <taxon>Burkholderiales</taxon>
        <taxon>Burkholderiaceae</taxon>
        <taxon>Burkholderia</taxon>
        <taxon>pseudomallei group</taxon>
    </lineage>
</organism>
<reference key="1">
    <citation type="journal article" date="2010" name="Genome Biol. Evol.">
        <title>Continuing evolution of Burkholderia mallei through genome reduction and large-scale rearrangements.</title>
        <authorList>
            <person name="Losada L."/>
            <person name="Ronning C.M."/>
            <person name="DeShazer D."/>
            <person name="Woods D."/>
            <person name="Fedorova N."/>
            <person name="Kim H.S."/>
            <person name="Shabalina S.A."/>
            <person name="Pearson T.R."/>
            <person name="Brinkac L."/>
            <person name="Tan P."/>
            <person name="Nandi T."/>
            <person name="Crabtree J."/>
            <person name="Badger J."/>
            <person name="Beckstrom-Sternberg S."/>
            <person name="Saqib M."/>
            <person name="Schutzer S.E."/>
            <person name="Keim P."/>
            <person name="Nierman W.C."/>
        </authorList>
    </citation>
    <scope>NUCLEOTIDE SEQUENCE [LARGE SCALE GENOMIC DNA]</scope>
    <source>
        <strain>NCTC 10229</strain>
    </source>
</reference>